<gene>
    <name evidence="11" type="primary">Spc25</name>
    <name evidence="5" type="synonym">Cal2</name>
    <name evidence="6" type="synonym">mitch</name>
    <name type="ORF">CG7242</name>
</gene>
<comment type="function">
    <text evidence="1 3 4">Acts as a component of the essential kinetochore-associated Ndc80 complex, which is required for chromosome segregation and spindle checkpoint activity during meiosis and mitosis (PubMed:17333235, PubMed:17895365). Required for kinetochore integrity and the organization of stable microtubule binding sites in the outer plate of the kinetochore (PubMed:17333235, PubMed:17895365). Participates in SAC signaling that responds specifically to disruptions in spindle microtubule dynamics (PubMed:17333235). The NDC80 complex synergistically enhances the affinity of the SKA1 complex for microtubules and may allow the NDC80 complex to track depolymerizing microtubules (By similarity).</text>
</comment>
<comment type="subunit">
    <text evidence="3">Component of the Ndc80 complex, which is composed of Ndc80, Nuf2 and Spc25.</text>
</comment>
<comment type="subcellular location">
    <subcellularLocation>
        <location evidence="3 4">Nucleus</location>
    </subcellularLocation>
    <subcellularLocation>
        <location evidence="3 4">Chromosome</location>
        <location evidence="3 4">Centromere</location>
        <location evidence="3 4">Kinetochore</location>
    </subcellularLocation>
    <text evidence="3 4">Independent of microtubules (MTs) and several other known kinetochore components. Ndc80 complex has polar orientation along the spindle axis.</text>
</comment>
<comment type="disruption phenotype">
    <text evidence="3 4">Die as late third-instar larvae. Mitotic neuroblasts in larval brains exhibit high levels of aneuploidy: chromosome alignment is compromised during spindle formation, many chromosomes display persistent mono-orientation which leads to aneuploidy during anaphase. Chromosome behavior is also disrupted during both meiotic divisions in spermatocytes: the entire chromosome complement often moves to only one spindle pole.</text>
</comment>
<comment type="similarity">
    <text evidence="2">Belongs to the SPC25 family.</text>
</comment>
<name>SPC25_DROME</name>
<keyword id="KW-0131">Cell cycle</keyword>
<keyword id="KW-0132">Cell division</keyword>
<keyword id="KW-0137">Centromere</keyword>
<keyword id="KW-0158">Chromosome</keyword>
<keyword id="KW-0175">Coiled coil</keyword>
<keyword id="KW-0995">Kinetochore</keyword>
<keyword id="KW-0469">Meiosis</keyword>
<keyword id="KW-0498">Mitosis</keyword>
<keyword id="KW-0539">Nucleus</keyword>
<keyword id="KW-1185">Reference proteome</keyword>
<accession>Q9V3V7</accession>
<sequence>MAIIMTESSYERRVKALYEKQIHMEALEAKFIKKVFKFNSNLLDVKEAASRHQRKVGKLQKVLMERREELDKRVSFIEELDRELEATKLHNLAMKDWFKQQKMLAKQRKNEIMESIHTLSKTTRTYINQEALPARVKGVTVLRGDKRDQLIPFDLKATDVEGLDSLCQHLESLNVDVAQWQQLISLAMDMAMESRAPTTPPKEADNCKSIIEIDLTSPMSHT</sequence>
<proteinExistence type="evidence at protein level"/>
<organism>
    <name type="scientific">Drosophila melanogaster</name>
    <name type="common">Fruit fly</name>
    <dbReference type="NCBI Taxonomy" id="7227"/>
    <lineage>
        <taxon>Eukaryota</taxon>
        <taxon>Metazoa</taxon>
        <taxon>Ecdysozoa</taxon>
        <taxon>Arthropoda</taxon>
        <taxon>Hexapoda</taxon>
        <taxon>Insecta</taxon>
        <taxon>Pterygota</taxon>
        <taxon>Neoptera</taxon>
        <taxon>Endopterygota</taxon>
        <taxon>Diptera</taxon>
        <taxon>Brachycera</taxon>
        <taxon>Muscomorpha</taxon>
        <taxon>Ephydroidea</taxon>
        <taxon>Drosophilidae</taxon>
        <taxon>Drosophila</taxon>
        <taxon>Sophophora</taxon>
    </lineage>
</organism>
<feature type="chain" id="PRO_0000392420" description="Kinetochore protein Spc25">
    <location>
        <begin position="1"/>
        <end position="222"/>
    </location>
</feature>
<feature type="coiled-coil region" evidence="2">
    <location>
        <begin position="51"/>
        <end position="86"/>
    </location>
</feature>
<protein>
    <recommendedName>
        <fullName evidence="6 9">Kinetochore protein Spc25</fullName>
    </recommendedName>
    <alternativeName>
        <fullName evidence="5">Chromosome alignment defect 2</fullName>
    </alternativeName>
    <alternativeName>
        <fullName evidence="6">Mitotic chaos</fullName>
    </alternativeName>
</protein>
<evidence type="ECO:0000250" key="1">
    <source>
        <dbReference type="UniProtKB" id="Q9HBM1"/>
    </source>
</evidence>
<evidence type="ECO:0000255" key="2"/>
<evidence type="ECO:0000269" key="3">
    <source>
    </source>
</evidence>
<evidence type="ECO:0000269" key="4">
    <source>
    </source>
</evidence>
<evidence type="ECO:0000303" key="5">
    <source>
    </source>
</evidence>
<evidence type="ECO:0000303" key="6">
    <source>
    </source>
</evidence>
<evidence type="ECO:0000305" key="7"/>
<evidence type="ECO:0000312" key="8">
    <source>
        <dbReference type="EMBL" id="AAF37563.1"/>
    </source>
</evidence>
<evidence type="ECO:0000312" key="9">
    <source>
        <dbReference type="EMBL" id="AAF54875.1"/>
    </source>
</evidence>
<evidence type="ECO:0000312" key="10">
    <source>
        <dbReference type="EMBL" id="AAK93305.1"/>
    </source>
</evidence>
<evidence type="ECO:0000312" key="11">
    <source>
        <dbReference type="FlyBase" id="FBgn0087021"/>
    </source>
</evidence>
<reference evidence="7 8" key="1">
    <citation type="journal article" date="2007" name="J. Cell Sci.">
        <title>Mitch a rapidly evolving component of the Ndc80 kinetochore complex required for correct chromosome segregation in Drosophila.</title>
        <authorList>
            <person name="Williams B."/>
            <person name="Leung G."/>
            <person name="Maiato H."/>
            <person name="Wong A."/>
            <person name="Li Z."/>
            <person name="Williams E.V."/>
            <person name="Kirkpatrick C."/>
            <person name="Aquadro C.F."/>
            <person name="Rieder C.L."/>
            <person name="Goldberg M.L."/>
        </authorList>
    </citation>
    <scope>NUCLEOTIDE SEQUENCE [GENOMIC DNA]</scope>
    <scope>FUNCTION</scope>
    <scope>SUBCELLULAR LOCATION</scope>
    <scope>DISRUPTION PHENOTYPE</scope>
</reference>
<reference evidence="9" key="2">
    <citation type="journal article" date="2000" name="Science">
        <title>The genome sequence of Drosophila melanogaster.</title>
        <authorList>
            <person name="Adams M.D."/>
            <person name="Celniker S.E."/>
            <person name="Holt R.A."/>
            <person name="Evans C.A."/>
            <person name="Gocayne J.D."/>
            <person name="Amanatides P.G."/>
            <person name="Scherer S.E."/>
            <person name="Li P.W."/>
            <person name="Hoskins R.A."/>
            <person name="Galle R.F."/>
            <person name="George R.A."/>
            <person name="Lewis S.E."/>
            <person name="Richards S."/>
            <person name="Ashburner M."/>
            <person name="Henderson S.N."/>
            <person name="Sutton G.G."/>
            <person name="Wortman J.R."/>
            <person name="Yandell M.D."/>
            <person name="Zhang Q."/>
            <person name="Chen L.X."/>
            <person name="Brandon R.C."/>
            <person name="Rogers Y.-H.C."/>
            <person name="Blazej R.G."/>
            <person name="Champe M."/>
            <person name="Pfeiffer B.D."/>
            <person name="Wan K.H."/>
            <person name="Doyle C."/>
            <person name="Baxter E.G."/>
            <person name="Helt G."/>
            <person name="Nelson C.R."/>
            <person name="Miklos G.L.G."/>
            <person name="Abril J.F."/>
            <person name="Agbayani A."/>
            <person name="An H.-J."/>
            <person name="Andrews-Pfannkoch C."/>
            <person name="Baldwin D."/>
            <person name="Ballew R.M."/>
            <person name="Basu A."/>
            <person name="Baxendale J."/>
            <person name="Bayraktaroglu L."/>
            <person name="Beasley E.M."/>
            <person name="Beeson K.Y."/>
            <person name="Benos P.V."/>
            <person name="Berman B.P."/>
            <person name="Bhandari D."/>
            <person name="Bolshakov S."/>
            <person name="Borkova D."/>
            <person name="Botchan M.R."/>
            <person name="Bouck J."/>
            <person name="Brokstein P."/>
            <person name="Brottier P."/>
            <person name="Burtis K.C."/>
            <person name="Busam D.A."/>
            <person name="Butler H."/>
            <person name="Cadieu E."/>
            <person name="Center A."/>
            <person name="Chandra I."/>
            <person name="Cherry J.M."/>
            <person name="Cawley S."/>
            <person name="Dahlke C."/>
            <person name="Davenport L.B."/>
            <person name="Davies P."/>
            <person name="de Pablos B."/>
            <person name="Delcher A."/>
            <person name="Deng Z."/>
            <person name="Mays A.D."/>
            <person name="Dew I."/>
            <person name="Dietz S.M."/>
            <person name="Dodson K."/>
            <person name="Doup L.E."/>
            <person name="Downes M."/>
            <person name="Dugan-Rocha S."/>
            <person name="Dunkov B.C."/>
            <person name="Dunn P."/>
            <person name="Durbin K.J."/>
            <person name="Evangelista C.C."/>
            <person name="Ferraz C."/>
            <person name="Ferriera S."/>
            <person name="Fleischmann W."/>
            <person name="Fosler C."/>
            <person name="Gabrielian A.E."/>
            <person name="Garg N.S."/>
            <person name="Gelbart W.M."/>
            <person name="Glasser K."/>
            <person name="Glodek A."/>
            <person name="Gong F."/>
            <person name="Gorrell J.H."/>
            <person name="Gu Z."/>
            <person name="Guan P."/>
            <person name="Harris M."/>
            <person name="Harris N.L."/>
            <person name="Harvey D.A."/>
            <person name="Heiman T.J."/>
            <person name="Hernandez J.R."/>
            <person name="Houck J."/>
            <person name="Hostin D."/>
            <person name="Houston K.A."/>
            <person name="Howland T.J."/>
            <person name="Wei M.-H."/>
            <person name="Ibegwam C."/>
            <person name="Jalali M."/>
            <person name="Kalush F."/>
            <person name="Karpen G.H."/>
            <person name="Ke Z."/>
            <person name="Kennison J.A."/>
            <person name="Ketchum K.A."/>
            <person name="Kimmel B.E."/>
            <person name="Kodira C.D."/>
            <person name="Kraft C.L."/>
            <person name="Kravitz S."/>
            <person name="Kulp D."/>
            <person name="Lai Z."/>
            <person name="Lasko P."/>
            <person name="Lei Y."/>
            <person name="Levitsky A.A."/>
            <person name="Li J.H."/>
            <person name="Li Z."/>
            <person name="Liang Y."/>
            <person name="Lin X."/>
            <person name="Liu X."/>
            <person name="Mattei B."/>
            <person name="McIntosh T.C."/>
            <person name="McLeod M.P."/>
            <person name="McPherson D."/>
            <person name="Merkulov G."/>
            <person name="Milshina N.V."/>
            <person name="Mobarry C."/>
            <person name="Morris J."/>
            <person name="Moshrefi A."/>
            <person name="Mount S.M."/>
            <person name="Moy M."/>
            <person name="Murphy B."/>
            <person name="Murphy L."/>
            <person name="Muzny D.M."/>
            <person name="Nelson D.L."/>
            <person name="Nelson D.R."/>
            <person name="Nelson K.A."/>
            <person name="Nixon K."/>
            <person name="Nusskern D.R."/>
            <person name="Pacleb J.M."/>
            <person name="Palazzolo M."/>
            <person name="Pittman G.S."/>
            <person name="Pan S."/>
            <person name="Pollard J."/>
            <person name="Puri V."/>
            <person name="Reese M.G."/>
            <person name="Reinert K."/>
            <person name="Remington K."/>
            <person name="Saunders R.D.C."/>
            <person name="Scheeler F."/>
            <person name="Shen H."/>
            <person name="Shue B.C."/>
            <person name="Siden-Kiamos I."/>
            <person name="Simpson M."/>
            <person name="Skupski M.P."/>
            <person name="Smith T.J."/>
            <person name="Spier E."/>
            <person name="Spradling A.C."/>
            <person name="Stapleton M."/>
            <person name="Strong R."/>
            <person name="Sun E."/>
            <person name="Svirskas R."/>
            <person name="Tector C."/>
            <person name="Turner R."/>
            <person name="Venter E."/>
            <person name="Wang A.H."/>
            <person name="Wang X."/>
            <person name="Wang Z.-Y."/>
            <person name="Wassarman D.A."/>
            <person name="Weinstock G.M."/>
            <person name="Weissenbach J."/>
            <person name="Williams S.M."/>
            <person name="Woodage T."/>
            <person name="Worley K.C."/>
            <person name="Wu D."/>
            <person name="Yang S."/>
            <person name="Yao Q.A."/>
            <person name="Ye J."/>
            <person name="Yeh R.-F."/>
            <person name="Zaveri J.S."/>
            <person name="Zhan M."/>
            <person name="Zhang G."/>
            <person name="Zhao Q."/>
            <person name="Zheng L."/>
            <person name="Zheng X.H."/>
            <person name="Zhong F.N."/>
            <person name="Zhong W."/>
            <person name="Zhou X."/>
            <person name="Zhu S.C."/>
            <person name="Zhu X."/>
            <person name="Smith H.O."/>
            <person name="Gibbs R.A."/>
            <person name="Myers E.W."/>
            <person name="Rubin G.M."/>
            <person name="Venter J.C."/>
        </authorList>
    </citation>
    <scope>NUCLEOTIDE SEQUENCE [LARGE SCALE GENOMIC DNA]</scope>
    <source>
        <strain>Berkeley</strain>
    </source>
</reference>
<reference evidence="7 9" key="3">
    <citation type="journal article" date="2002" name="Genome Biol.">
        <title>Annotation of the Drosophila melanogaster euchromatic genome: a systematic review.</title>
        <authorList>
            <person name="Misra S."/>
            <person name="Crosby M.A."/>
            <person name="Mungall C.J."/>
            <person name="Matthews B.B."/>
            <person name="Campbell K.S."/>
            <person name="Hradecky P."/>
            <person name="Huang Y."/>
            <person name="Kaminker J.S."/>
            <person name="Millburn G.H."/>
            <person name="Prochnik S.E."/>
            <person name="Smith C.D."/>
            <person name="Tupy J.L."/>
            <person name="Whitfield E.J."/>
            <person name="Bayraktaroglu L."/>
            <person name="Berman B.P."/>
            <person name="Bettencourt B.R."/>
            <person name="Celniker S.E."/>
            <person name="de Grey A.D.N.J."/>
            <person name="Drysdale R.A."/>
            <person name="Harris N.L."/>
            <person name="Richter J."/>
            <person name="Russo S."/>
            <person name="Schroeder A.J."/>
            <person name="Shu S.Q."/>
            <person name="Stapleton M."/>
            <person name="Yamada C."/>
            <person name="Ashburner M."/>
            <person name="Gelbart W.M."/>
            <person name="Rubin G.M."/>
            <person name="Lewis S.E."/>
        </authorList>
    </citation>
    <scope>GENOME REANNOTATION</scope>
    <source>
        <strain>Berkeley</strain>
    </source>
</reference>
<reference evidence="10" key="4">
    <citation type="submission" date="2003-01" db="EMBL/GenBank/DDBJ databases">
        <authorList>
            <person name="Stapleton M."/>
            <person name="Brokstein P."/>
            <person name="Hong L."/>
            <person name="Agbayani A."/>
            <person name="Carlson J.W."/>
            <person name="Champe M."/>
            <person name="Chavez C."/>
            <person name="Dorsett V."/>
            <person name="Dresnek D."/>
            <person name="Farfan D."/>
            <person name="Frise E."/>
            <person name="George R.A."/>
            <person name="Gonzalez M."/>
            <person name="Guarin H."/>
            <person name="Kronmiller B."/>
            <person name="Li P.W."/>
            <person name="Liao G."/>
            <person name="Miranda A."/>
            <person name="Mungall C.J."/>
            <person name="Nunoo J."/>
            <person name="Pacleb J.M."/>
            <person name="Paragas V."/>
            <person name="Park S."/>
            <person name="Patel S."/>
            <person name="Phouanenavong S."/>
            <person name="Wan K.H."/>
            <person name="Yu C."/>
            <person name="Lewis S.E."/>
            <person name="Rubin G.M."/>
            <person name="Celniker S.E."/>
        </authorList>
    </citation>
    <scope>NUCLEOTIDE SEQUENCE [LARGE SCALE MRNA]</scope>
    <source>
        <strain evidence="10">Berkeley</strain>
        <tissue>Embryo</tissue>
    </source>
</reference>
<reference evidence="7" key="5">
    <citation type="journal article" date="2007" name="Chromosoma">
        <title>Spatial organization of a ubiquitous eukaryotic kinetochore protein network in Drosophila chromosomes.</title>
        <authorList>
            <person name="Schittenhelm R.B."/>
            <person name="Heeger S."/>
            <person name="Althoff F."/>
            <person name="Walter A."/>
            <person name="Heidmann S."/>
            <person name="Mechtler K."/>
            <person name="Lehner C.F."/>
        </authorList>
    </citation>
    <scope>FUNCTION</scope>
    <scope>INTERACTION WITH NDC80 AND NUF2</scope>
    <scope>SUBCELLULAR LOCATION</scope>
    <scope>DISRUPTION PHENOTYPE</scope>
</reference>
<reference evidence="7" key="6">
    <citation type="journal article" date="2007" name="Science">
        <title>Genes required for mitotic spindle assembly in Drosophila S2 cells.</title>
        <authorList>
            <person name="Goshima G."/>
            <person name="Wollman R."/>
            <person name="Goodwin S.S."/>
            <person name="Zhang N."/>
            <person name="Scholey J.M."/>
            <person name="Vale R.D."/>
            <person name="Stuurman N."/>
        </authorList>
    </citation>
    <scope>IDENTIFICATION</scope>
</reference>
<dbReference type="EMBL" id="AF219224">
    <property type="protein sequence ID" value="AAF37563.1"/>
    <property type="molecule type" value="mRNA"/>
</dbReference>
<dbReference type="EMBL" id="AE014297">
    <property type="protein sequence ID" value="AAF54875.1"/>
    <property type="molecule type" value="Genomic_DNA"/>
</dbReference>
<dbReference type="EMBL" id="AY051881">
    <property type="protein sequence ID" value="AAK93305.1"/>
    <property type="molecule type" value="mRNA"/>
</dbReference>
<dbReference type="RefSeq" id="NP_650239.1">
    <property type="nucleotide sequence ID" value="NM_141982.3"/>
</dbReference>
<dbReference type="SMR" id="Q9V3V7"/>
<dbReference type="BioGRID" id="66674">
    <property type="interactions" value="18"/>
</dbReference>
<dbReference type="FunCoup" id="Q9V3V7">
    <property type="interactions" value="56"/>
</dbReference>
<dbReference type="IntAct" id="Q9V3V7">
    <property type="interactions" value="4"/>
</dbReference>
<dbReference type="STRING" id="7227.FBpp0082158"/>
<dbReference type="PaxDb" id="7227-FBpp0082158"/>
<dbReference type="DNASU" id="41585"/>
<dbReference type="EnsemblMetazoa" id="FBtr0082690">
    <property type="protein sequence ID" value="FBpp0082158"/>
    <property type="gene ID" value="FBgn0087021"/>
</dbReference>
<dbReference type="GeneID" id="41585"/>
<dbReference type="KEGG" id="dme:Dmel_CG7242"/>
<dbReference type="UCSC" id="CG7242-RA">
    <property type="organism name" value="d. melanogaster"/>
</dbReference>
<dbReference type="AGR" id="FB:FBgn0087021"/>
<dbReference type="CTD" id="57405"/>
<dbReference type="FlyBase" id="FBgn0087021">
    <property type="gene designation" value="Spc25"/>
</dbReference>
<dbReference type="VEuPathDB" id="VectorBase:FBgn0087021"/>
<dbReference type="eggNOG" id="ENOG502RVT8">
    <property type="taxonomic scope" value="Eukaryota"/>
</dbReference>
<dbReference type="HOGENOM" id="CLU_1246541_0_0_1"/>
<dbReference type="InParanoid" id="Q9V3V7"/>
<dbReference type="OMA" id="NELMECM"/>
<dbReference type="OrthoDB" id="8006210at2759"/>
<dbReference type="PhylomeDB" id="Q9V3V7"/>
<dbReference type="BioGRID-ORCS" id="41585">
    <property type="hits" value="0 hits in 1 CRISPR screen"/>
</dbReference>
<dbReference type="GenomeRNAi" id="41585"/>
<dbReference type="PRO" id="PR:Q9V3V7"/>
<dbReference type="Proteomes" id="UP000000803">
    <property type="component" value="Chromosome 3R"/>
</dbReference>
<dbReference type="Bgee" id="FBgn0087021">
    <property type="expression patterns" value="Expressed in secondary oocyte and 33 other cell types or tissues"/>
</dbReference>
<dbReference type="GO" id="GO:0000776">
    <property type="term" value="C:kinetochore"/>
    <property type="evidence" value="ECO:0000314"/>
    <property type="project" value="FlyBase"/>
</dbReference>
<dbReference type="GO" id="GO:0031262">
    <property type="term" value="C:Ndc80 complex"/>
    <property type="evidence" value="ECO:0000314"/>
    <property type="project" value="FlyBase"/>
</dbReference>
<dbReference type="GO" id="GO:0005634">
    <property type="term" value="C:nucleus"/>
    <property type="evidence" value="ECO:0007669"/>
    <property type="project" value="UniProtKB-SubCell"/>
</dbReference>
<dbReference type="GO" id="GO:0051301">
    <property type="term" value="P:cell division"/>
    <property type="evidence" value="ECO:0007669"/>
    <property type="project" value="UniProtKB-KW"/>
</dbReference>
<dbReference type="GO" id="GO:0007059">
    <property type="term" value="P:chromosome segregation"/>
    <property type="evidence" value="ECO:0000315"/>
    <property type="project" value="FlyBase"/>
</dbReference>
<dbReference type="GO" id="GO:0051311">
    <property type="term" value="P:meiotic metaphase chromosome alignment"/>
    <property type="evidence" value="ECO:0000315"/>
    <property type="project" value="UniProtKB"/>
</dbReference>
<dbReference type="GO" id="GO:0000212">
    <property type="term" value="P:meiotic spindle organization"/>
    <property type="evidence" value="ECO:0000315"/>
    <property type="project" value="UniProtKB"/>
</dbReference>
<dbReference type="GO" id="GO:0007080">
    <property type="term" value="P:mitotic metaphase chromosome alignment"/>
    <property type="evidence" value="ECO:0000315"/>
    <property type="project" value="FlyBase"/>
</dbReference>